<proteinExistence type="inferred from homology"/>
<comment type="function">
    <text evidence="1">An essential GTPase that binds both GDP and GTP, with rapid nucleotide exchange. Plays a role in 16S rRNA processing and 30S ribosomal subunit biogenesis and possibly also in cell cycle regulation and energy metabolism.</text>
</comment>
<comment type="subunit">
    <text evidence="1">Monomer.</text>
</comment>
<comment type="subcellular location">
    <subcellularLocation>
        <location>Cytoplasm</location>
    </subcellularLocation>
    <subcellularLocation>
        <location evidence="1">Cell membrane</location>
        <topology evidence="1">Peripheral membrane protein</topology>
    </subcellularLocation>
</comment>
<comment type="similarity">
    <text evidence="1 2">Belongs to the TRAFAC class TrmE-Era-EngA-EngB-Septin-like GTPase superfamily. Era GTPase family.</text>
</comment>
<reference key="1">
    <citation type="journal article" date="2007" name="PLoS ONE">
        <title>Analysis of the neurotoxin complex genes in Clostridium botulinum A1-A4 and B1 strains: BoNT/A3, /Ba4 and /B1 clusters are located within plasmids.</title>
        <authorList>
            <person name="Smith T.J."/>
            <person name="Hill K.K."/>
            <person name="Foley B.T."/>
            <person name="Detter J.C."/>
            <person name="Munk A.C."/>
            <person name="Bruce D.C."/>
            <person name="Doggett N.A."/>
            <person name="Smith L.A."/>
            <person name="Marks J.D."/>
            <person name="Xie G."/>
            <person name="Brettin T.S."/>
        </authorList>
    </citation>
    <scope>NUCLEOTIDE SEQUENCE [LARGE SCALE GENOMIC DNA]</scope>
    <source>
        <strain>ATCC 19397 / Type A</strain>
    </source>
</reference>
<organism>
    <name type="scientific">Clostridium botulinum (strain ATCC 19397 / Type A)</name>
    <dbReference type="NCBI Taxonomy" id="441770"/>
    <lineage>
        <taxon>Bacteria</taxon>
        <taxon>Bacillati</taxon>
        <taxon>Bacillota</taxon>
        <taxon>Clostridia</taxon>
        <taxon>Eubacteriales</taxon>
        <taxon>Clostridiaceae</taxon>
        <taxon>Clostridium</taxon>
    </lineage>
</organism>
<accession>A7FXK1</accession>
<gene>
    <name evidence="1" type="primary">era</name>
    <name type="ordered locus">CLB_2909</name>
</gene>
<dbReference type="EMBL" id="CP000726">
    <property type="protein sequence ID" value="ABS33807.1"/>
    <property type="molecule type" value="Genomic_DNA"/>
</dbReference>
<dbReference type="RefSeq" id="WP_012047995.1">
    <property type="nucleotide sequence ID" value="NC_009697.1"/>
</dbReference>
<dbReference type="SMR" id="A7FXK1"/>
<dbReference type="GeneID" id="5185003"/>
<dbReference type="KEGG" id="cba:CLB_2909"/>
<dbReference type="HOGENOM" id="CLU_038009_1_0_9"/>
<dbReference type="GO" id="GO:0005829">
    <property type="term" value="C:cytosol"/>
    <property type="evidence" value="ECO:0007669"/>
    <property type="project" value="TreeGrafter"/>
</dbReference>
<dbReference type="GO" id="GO:0005886">
    <property type="term" value="C:plasma membrane"/>
    <property type="evidence" value="ECO:0007669"/>
    <property type="project" value="UniProtKB-SubCell"/>
</dbReference>
<dbReference type="GO" id="GO:0005525">
    <property type="term" value="F:GTP binding"/>
    <property type="evidence" value="ECO:0007669"/>
    <property type="project" value="UniProtKB-UniRule"/>
</dbReference>
<dbReference type="GO" id="GO:0003924">
    <property type="term" value="F:GTPase activity"/>
    <property type="evidence" value="ECO:0007669"/>
    <property type="project" value="UniProtKB-UniRule"/>
</dbReference>
<dbReference type="GO" id="GO:0043024">
    <property type="term" value="F:ribosomal small subunit binding"/>
    <property type="evidence" value="ECO:0007669"/>
    <property type="project" value="TreeGrafter"/>
</dbReference>
<dbReference type="GO" id="GO:0070181">
    <property type="term" value="F:small ribosomal subunit rRNA binding"/>
    <property type="evidence" value="ECO:0007669"/>
    <property type="project" value="UniProtKB-UniRule"/>
</dbReference>
<dbReference type="GO" id="GO:0000028">
    <property type="term" value="P:ribosomal small subunit assembly"/>
    <property type="evidence" value="ECO:0007669"/>
    <property type="project" value="TreeGrafter"/>
</dbReference>
<dbReference type="CDD" id="cd04163">
    <property type="entry name" value="Era"/>
    <property type="match status" value="1"/>
</dbReference>
<dbReference type="CDD" id="cd22534">
    <property type="entry name" value="KH-II_Era"/>
    <property type="match status" value="1"/>
</dbReference>
<dbReference type="FunFam" id="3.30.300.20:FF:000003">
    <property type="entry name" value="GTPase Era"/>
    <property type="match status" value="1"/>
</dbReference>
<dbReference type="FunFam" id="3.40.50.300:FF:000094">
    <property type="entry name" value="GTPase Era"/>
    <property type="match status" value="1"/>
</dbReference>
<dbReference type="Gene3D" id="3.30.300.20">
    <property type="match status" value="1"/>
</dbReference>
<dbReference type="Gene3D" id="3.40.50.300">
    <property type="entry name" value="P-loop containing nucleotide triphosphate hydrolases"/>
    <property type="match status" value="1"/>
</dbReference>
<dbReference type="HAMAP" id="MF_00367">
    <property type="entry name" value="GTPase_Era"/>
    <property type="match status" value="1"/>
</dbReference>
<dbReference type="InterPro" id="IPR030388">
    <property type="entry name" value="G_ERA_dom"/>
</dbReference>
<dbReference type="InterPro" id="IPR006073">
    <property type="entry name" value="GTP-bd"/>
</dbReference>
<dbReference type="InterPro" id="IPR005662">
    <property type="entry name" value="GTPase_Era-like"/>
</dbReference>
<dbReference type="InterPro" id="IPR015946">
    <property type="entry name" value="KH_dom-like_a/b"/>
</dbReference>
<dbReference type="InterPro" id="IPR004044">
    <property type="entry name" value="KH_dom_type_2"/>
</dbReference>
<dbReference type="InterPro" id="IPR009019">
    <property type="entry name" value="KH_sf_prok-type"/>
</dbReference>
<dbReference type="InterPro" id="IPR027417">
    <property type="entry name" value="P-loop_NTPase"/>
</dbReference>
<dbReference type="InterPro" id="IPR005225">
    <property type="entry name" value="Small_GTP-bd"/>
</dbReference>
<dbReference type="NCBIfam" id="TIGR00436">
    <property type="entry name" value="era"/>
    <property type="match status" value="1"/>
</dbReference>
<dbReference type="NCBIfam" id="NF000908">
    <property type="entry name" value="PRK00089.1"/>
    <property type="match status" value="1"/>
</dbReference>
<dbReference type="NCBIfam" id="TIGR00231">
    <property type="entry name" value="small_GTP"/>
    <property type="match status" value="1"/>
</dbReference>
<dbReference type="PANTHER" id="PTHR42698">
    <property type="entry name" value="GTPASE ERA"/>
    <property type="match status" value="1"/>
</dbReference>
<dbReference type="PANTHER" id="PTHR42698:SF1">
    <property type="entry name" value="GTPASE ERA, MITOCHONDRIAL"/>
    <property type="match status" value="1"/>
</dbReference>
<dbReference type="Pfam" id="PF07650">
    <property type="entry name" value="KH_2"/>
    <property type="match status" value="1"/>
</dbReference>
<dbReference type="Pfam" id="PF01926">
    <property type="entry name" value="MMR_HSR1"/>
    <property type="match status" value="1"/>
</dbReference>
<dbReference type="SUPFAM" id="SSF52540">
    <property type="entry name" value="P-loop containing nucleoside triphosphate hydrolases"/>
    <property type="match status" value="1"/>
</dbReference>
<dbReference type="SUPFAM" id="SSF54814">
    <property type="entry name" value="Prokaryotic type KH domain (KH-domain type II)"/>
    <property type="match status" value="1"/>
</dbReference>
<dbReference type="PROSITE" id="PS51713">
    <property type="entry name" value="G_ERA"/>
    <property type="match status" value="1"/>
</dbReference>
<dbReference type="PROSITE" id="PS50823">
    <property type="entry name" value="KH_TYPE_2"/>
    <property type="match status" value="1"/>
</dbReference>
<keyword id="KW-1003">Cell membrane</keyword>
<keyword id="KW-0963">Cytoplasm</keyword>
<keyword id="KW-0342">GTP-binding</keyword>
<keyword id="KW-0472">Membrane</keyword>
<keyword id="KW-0547">Nucleotide-binding</keyword>
<keyword id="KW-0690">Ribosome biogenesis</keyword>
<keyword id="KW-0694">RNA-binding</keyword>
<keyword id="KW-0699">rRNA-binding</keyword>
<feature type="chain" id="PRO_1000121308" description="GTPase Era">
    <location>
        <begin position="1"/>
        <end position="296"/>
    </location>
</feature>
<feature type="domain" description="Era-type G" evidence="2">
    <location>
        <begin position="3"/>
        <end position="170"/>
    </location>
</feature>
<feature type="domain" description="KH type-2" evidence="1">
    <location>
        <begin position="201"/>
        <end position="278"/>
    </location>
</feature>
<feature type="region of interest" description="G1" evidence="2">
    <location>
        <begin position="11"/>
        <end position="18"/>
    </location>
</feature>
<feature type="region of interest" description="G2" evidence="2">
    <location>
        <begin position="37"/>
        <end position="41"/>
    </location>
</feature>
<feature type="region of interest" description="G3" evidence="2">
    <location>
        <begin position="58"/>
        <end position="61"/>
    </location>
</feature>
<feature type="region of interest" description="G4" evidence="2">
    <location>
        <begin position="120"/>
        <end position="123"/>
    </location>
</feature>
<feature type="region of interest" description="G5" evidence="2">
    <location>
        <begin position="149"/>
        <end position="151"/>
    </location>
</feature>
<feature type="binding site" evidence="1">
    <location>
        <begin position="11"/>
        <end position="18"/>
    </location>
    <ligand>
        <name>GTP</name>
        <dbReference type="ChEBI" id="CHEBI:37565"/>
    </ligand>
</feature>
<feature type="binding site" evidence="1">
    <location>
        <begin position="58"/>
        <end position="62"/>
    </location>
    <ligand>
        <name>GTP</name>
        <dbReference type="ChEBI" id="CHEBI:37565"/>
    </ligand>
</feature>
<feature type="binding site" evidence="1">
    <location>
        <begin position="120"/>
        <end position="123"/>
    </location>
    <ligand>
        <name>GTP</name>
        <dbReference type="ChEBI" id="CHEBI:37565"/>
    </ligand>
</feature>
<name>ERA_CLOB1</name>
<protein>
    <recommendedName>
        <fullName evidence="1">GTPase Era</fullName>
    </recommendedName>
</protein>
<evidence type="ECO:0000255" key="1">
    <source>
        <dbReference type="HAMAP-Rule" id="MF_00367"/>
    </source>
</evidence>
<evidence type="ECO:0000255" key="2">
    <source>
        <dbReference type="PROSITE-ProRule" id="PRU01050"/>
    </source>
</evidence>
<sequence>MFKSGFVTIVGRPNVGKSTLLNAIMKEKLSIVSCRPQTTRNNIQTILTEDNYQLVFVDTPGIHKPKHKLGEYMVKSASEAMKDVDLVLFLINPDEKPGRGDLFIIEQLKEVKVPVFLVLNKIDENPQEKVAETLKTYSELMEFEEIIPISALKGKNIDLLKELMFKYIPEGPQYYPEDMIIDQNERFIVAEIVREKALRLLSEEVPHGIAVEILQMKKNEKGTYHIEGNILCEKNSHKPIIIGKGGSKLKKISQYARQDIEAFLQSKVYIRLWVKVKEEWRDNQSLLKELGYKNMK</sequence>